<proteinExistence type="inferred from homology"/>
<feature type="chain" id="PRO_0000144433" description="ATP synthase subunit beta">
    <location>
        <begin position="1"/>
        <end position="466"/>
    </location>
</feature>
<feature type="binding site" evidence="1">
    <location>
        <begin position="153"/>
        <end position="160"/>
    </location>
    <ligand>
        <name>ATP</name>
        <dbReference type="ChEBI" id="CHEBI:30616"/>
    </ligand>
</feature>
<reference key="1">
    <citation type="journal article" date="2000" name="DNA Seq.">
        <title>Sequence analysis of the atp operon of Clostridium acetobutylicum DSM 792 encoding the F0F1 ATP synthase.</title>
        <authorList>
            <person name="Externbrink T."/>
            <person name="Hujer S."/>
            <person name="Winzer K."/>
            <person name="Duerre P."/>
        </authorList>
    </citation>
    <scope>NUCLEOTIDE SEQUENCE [GENOMIC DNA]</scope>
    <source>
        <strain>ATCC 824 / DSM 792 / JCM 1419 / IAM 19013 / LMG 5710 / NBRC 13948 / NRRL B-527 / VKM B-1787 / 2291 / W</strain>
    </source>
</reference>
<reference key="2">
    <citation type="journal article" date="2001" name="J. Bacteriol.">
        <title>Genome sequence and comparative analysis of the solvent-producing bacterium Clostridium acetobutylicum.</title>
        <authorList>
            <person name="Noelling J."/>
            <person name="Breton G."/>
            <person name="Omelchenko M.V."/>
            <person name="Makarova K.S."/>
            <person name="Zeng Q."/>
            <person name="Gibson R."/>
            <person name="Lee H.M."/>
            <person name="Dubois J."/>
            <person name="Qiu D."/>
            <person name="Hitti J."/>
            <person name="Wolf Y.I."/>
            <person name="Tatusov R.L."/>
            <person name="Sabathe F."/>
            <person name="Doucette-Stamm L.A."/>
            <person name="Soucaille P."/>
            <person name="Daly M.J."/>
            <person name="Bennett G.N."/>
            <person name="Koonin E.V."/>
            <person name="Smith D.R."/>
        </authorList>
    </citation>
    <scope>NUCLEOTIDE SEQUENCE [LARGE SCALE GENOMIC DNA]</scope>
    <source>
        <strain>ATCC 824 / DSM 792 / JCM 1419 / IAM 19013 / LMG 5710 / NBRC 13948 / NRRL B-527 / VKM B-1787 / 2291 / W</strain>
    </source>
</reference>
<evidence type="ECO:0000255" key="1">
    <source>
        <dbReference type="HAMAP-Rule" id="MF_01347"/>
    </source>
</evidence>
<organism>
    <name type="scientific">Clostridium acetobutylicum (strain ATCC 824 / DSM 792 / JCM 1419 / IAM 19013 / LMG 5710 / NBRC 13948 / NRRL B-527 / VKM B-1787 / 2291 / W)</name>
    <dbReference type="NCBI Taxonomy" id="272562"/>
    <lineage>
        <taxon>Bacteria</taxon>
        <taxon>Bacillati</taxon>
        <taxon>Bacillota</taxon>
        <taxon>Clostridia</taxon>
        <taxon>Eubacteriales</taxon>
        <taxon>Clostridiaceae</taxon>
        <taxon>Clostridium</taxon>
    </lineage>
</organism>
<keyword id="KW-0066">ATP synthesis</keyword>
<keyword id="KW-0067">ATP-binding</keyword>
<keyword id="KW-1003">Cell membrane</keyword>
<keyword id="KW-0139">CF(1)</keyword>
<keyword id="KW-0375">Hydrogen ion transport</keyword>
<keyword id="KW-0406">Ion transport</keyword>
<keyword id="KW-0472">Membrane</keyword>
<keyword id="KW-0547">Nucleotide-binding</keyword>
<keyword id="KW-1185">Reference proteome</keyword>
<keyword id="KW-1278">Translocase</keyword>
<keyword id="KW-0813">Transport</keyword>
<comment type="function">
    <text evidence="1">Produces ATP from ADP in the presence of a proton gradient across the membrane. The catalytic sites are hosted primarily by the beta subunits.</text>
</comment>
<comment type="catalytic activity">
    <reaction evidence="1">
        <text>ATP + H2O + 4 H(+)(in) = ADP + phosphate + 5 H(+)(out)</text>
        <dbReference type="Rhea" id="RHEA:57720"/>
        <dbReference type="ChEBI" id="CHEBI:15377"/>
        <dbReference type="ChEBI" id="CHEBI:15378"/>
        <dbReference type="ChEBI" id="CHEBI:30616"/>
        <dbReference type="ChEBI" id="CHEBI:43474"/>
        <dbReference type="ChEBI" id="CHEBI:456216"/>
        <dbReference type="EC" id="7.1.2.2"/>
    </reaction>
</comment>
<comment type="subunit">
    <text evidence="1">F-type ATPases have 2 components, CF(1) - the catalytic core - and CF(0) - the membrane proton channel. CF(1) has five subunits: alpha(3), beta(3), gamma(1), delta(1), epsilon(1). CF(0) has three main subunits: a(1), b(2) and c(9-12). The alpha and beta chains form an alternating ring which encloses part of the gamma chain. CF(1) is attached to CF(0) by a central stalk formed by the gamma and epsilon chains, while a peripheral stalk is formed by the delta and b chains.</text>
</comment>
<comment type="subcellular location">
    <subcellularLocation>
        <location evidence="1">Cell membrane</location>
        <topology evidence="1">Peripheral membrane protein</topology>
    </subcellularLocation>
</comment>
<comment type="similarity">
    <text evidence="1">Belongs to the ATPase alpha/beta chains family.</text>
</comment>
<sequence>MPEHVGKIVQVIGPVVDIKFDAENLPDIYNSIEIDMGDNKKLIAEVEQHVGDDIVRTIAMEGTDGLKRGMEAVNTGKPISVPVGENVLGRLFNVLGQTIDEAGDMNADKYYPIHRPAPTFEEQSVQPEMFETGIKVIDLLAPYQKGGKIGLFGGAGVGKTVLIQELINNIAKEHGGLSVFTGVGERTREGNDLYYEMKDSGVINKTALVFGQMNEPPGARMRVALTGLTMAEYFRDKGQDVLLFIDNIFRFTQAGSEVSALLGRIPSAVGYQPTLANEMGALQERITSTKQGSITSVQAVYVPADDLTDPAPATTFTHLDATTVLSREISNLGIYPAVSPLESTSRILDPRIVGEEHYEVANKVKHILERYQELQDIIAILGVDELSDEDRLLVGRARRVQRFLSQAFSVAEQFTGMKGQFVPVKDTIRSFKEILDGKCDDLPEAAFLFAGTIEDVKEKAKKMMES</sequence>
<protein>
    <recommendedName>
        <fullName evidence="1">ATP synthase subunit beta</fullName>
        <ecNumber evidence="1">7.1.2.2</ecNumber>
    </recommendedName>
    <alternativeName>
        <fullName evidence="1">ATP synthase F1 sector subunit beta</fullName>
    </alternativeName>
    <alternativeName>
        <fullName evidence="1">F-ATPase subunit beta</fullName>
    </alternativeName>
</protein>
<accession>Q9Z687</accession>
<dbReference type="EC" id="7.1.2.2" evidence="1"/>
<dbReference type="EMBL" id="AF101055">
    <property type="protein sequence ID" value="AAD16426.1"/>
    <property type="molecule type" value="Genomic_DNA"/>
</dbReference>
<dbReference type="EMBL" id="AE001437">
    <property type="protein sequence ID" value="AAK80808.1"/>
    <property type="molecule type" value="Genomic_DNA"/>
</dbReference>
<dbReference type="PIR" id="E97252">
    <property type="entry name" value="E97252"/>
</dbReference>
<dbReference type="RefSeq" id="NP_349468.1">
    <property type="nucleotide sequence ID" value="NC_003030.1"/>
</dbReference>
<dbReference type="RefSeq" id="WP_010966149.1">
    <property type="nucleotide sequence ID" value="NC_003030.1"/>
</dbReference>
<dbReference type="SMR" id="Q9Z687"/>
<dbReference type="STRING" id="272562.CA_C2865"/>
<dbReference type="GeneID" id="44999353"/>
<dbReference type="KEGG" id="cac:CA_C2865"/>
<dbReference type="PATRIC" id="fig|272562.8.peg.3049"/>
<dbReference type="eggNOG" id="COG0055">
    <property type="taxonomic scope" value="Bacteria"/>
</dbReference>
<dbReference type="HOGENOM" id="CLU_022398_0_2_9"/>
<dbReference type="OrthoDB" id="9801639at2"/>
<dbReference type="Proteomes" id="UP000000814">
    <property type="component" value="Chromosome"/>
</dbReference>
<dbReference type="GO" id="GO:0005886">
    <property type="term" value="C:plasma membrane"/>
    <property type="evidence" value="ECO:0007669"/>
    <property type="project" value="UniProtKB-SubCell"/>
</dbReference>
<dbReference type="GO" id="GO:0045259">
    <property type="term" value="C:proton-transporting ATP synthase complex"/>
    <property type="evidence" value="ECO:0007669"/>
    <property type="project" value="UniProtKB-KW"/>
</dbReference>
<dbReference type="GO" id="GO:0005524">
    <property type="term" value="F:ATP binding"/>
    <property type="evidence" value="ECO:0007669"/>
    <property type="project" value="UniProtKB-UniRule"/>
</dbReference>
<dbReference type="GO" id="GO:0016887">
    <property type="term" value="F:ATP hydrolysis activity"/>
    <property type="evidence" value="ECO:0007669"/>
    <property type="project" value="InterPro"/>
</dbReference>
<dbReference type="GO" id="GO:0046933">
    <property type="term" value="F:proton-transporting ATP synthase activity, rotational mechanism"/>
    <property type="evidence" value="ECO:0007669"/>
    <property type="project" value="UniProtKB-UniRule"/>
</dbReference>
<dbReference type="CDD" id="cd18110">
    <property type="entry name" value="ATP-synt_F1_beta_C"/>
    <property type="match status" value="1"/>
</dbReference>
<dbReference type="CDD" id="cd18115">
    <property type="entry name" value="ATP-synt_F1_beta_N"/>
    <property type="match status" value="1"/>
</dbReference>
<dbReference type="CDD" id="cd01133">
    <property type="entry name" value="F1-ATPase_beta_CD"/>
    <property type="match status" value="1"/>
</dbReference>
<dbReference type="FunFam" id="1.10.1140.10:FF:000001">
    <property type="entry name" value="ATP synthase subunit beta"/>
    <property type="match status" value="1"/>
</dbReference>
<dbReference type="FunFam" id="2.40.10.170:FF:000005">
    <property type="entry name" value="ATP synthase subunit beta"/>
    <property type="match status" value="1"/>
</dbReference>
<dbReference type="FunFam" id="3.40.50.300:FF:000004">
    <property type="entry name" value="ATP synthase subunit beta"/>
    <property type="match status" value="1"/>
</dbReference>
<dbReference type="Gene3D" id="2.40.10.170">
    <property type="match status" value="1"/>
</dbReference>
<dbReference type="Gene3D" id="1.10.1140.10">
    <property type="entry name" value="Bovine Mitochondrial F1-atpase, Atp Synthase Beta Chain, Chain D, domain 3"/>
    <property type="match status" value="1"/>
</dbReference>
<dbReference type="Gene3D" id="3.40.50.300">
    <property type="entry name" value="P-loop containing nucleotide triphosphate hydrolases"/>
    <property type="match status" value="1"/>
</dbReference>
<dbReference type="HAMAP" id="MF_01347">
    <property type="entry name" value="ATP_synth_beta_bact"/>
    <property type="match status" value="1"/>
</dbReference>
<dbReference type="InterPro" id="IPR003593">
    <property type="entry name" value="AAA+_ATPase"/>
</dbReference>
<dbReference type="InterPro" id="IPR055190">
    <property type="entry name" value="ATP-synt_VA_C"/>
</dbReference>
<dbReference type="InterPro" id="IPR005722">
    <property type="entry name" value="ATP_synth_F1_bsu"/>
</dbReference>
<dbReference type="InterPro" id="IPR050053">
    <property type="entry name" value="ATPase_alpha/beta_chains"/>
</dbReference>
<dbReference type="InterPro" id="IPR004100">
    <property type="entry name" value="ATPase_F1/V1/A1_a/bsu_N"/>
</dbReference>
<dbReference type="InterPro" id="IPR036121">
    <property type="entry name" value="ATPase_F1/V1/A1_a/bsu_N_sf"/>
</dbReference>
<dbReference type="InterPro" id="IPR000194">
    <property type="entry name" value="ATPase_F1/V1/A1_a/bsu_nucl-bd"/>
</dbReference>
<dbReference type="InterPro" id="IPR024034">
    <property type="entry name" value="ATPase_F1/V1_b/a_C"/>
</dbReference>
<dbReference type="InterPro" id="IPR027417">
    <property type="entry name" value="P-loop_NTPase"/>
</dbReference>
<dbReference type="NCBIfam" id="TIGR01039">
    <property type="entry name" value="atpD"/>
    <property type="match status" value="1"/>
</dbReference>
<dbReference type="PANTHER" id="PTHR15184">
    <property type="entry name" value="ATP SYNTHASE"/>
    <property type="match status" value="1"/>
</dbReference>
<dbReference type="PANTHER" id="PTHR15184:SF71">
    <property type="entry name" value="ATP SYNTHASE SUBUNIT BETA, MITOCHONDRIAL"/>
    <property type="match status" value="1"/>
</dbReference>
<dbReference type="Pfam" id="PF00006">
    <property type="entry name" value="ATP-synt_ab"/>
    <property type="match status" value="1"/>
</dbReference>
<dbReference type="Pfam" id="PF02874">
    <property type="entry name" value="ATP-synt_ab_N"/>
    <property type="match status" value="1"/>
</dbReference>
<dbReference type="Pfam" id="PF22919">
    <property type="entry name" value="ATP-synt_VA_C"/>
    <property type="match status" value="1"/>
</dbReference>
<dbReference type="SMART" id="SM00382">
    <property type="entry name" value="AAA"/>
    <property type="match status" value="1"/>
</dbReference>
<dbReference type="SUPFAM" id="SSF47917">
    <property type="entry name" value="C-terminal domain of alpha and beta subunits of F1 ATP synthase"/>
    <property type="match status" value="1"/>
</dbReference>
<dbReference type="SUPFAM" id="SSF50615">
    <property type="entry name" value="N-terminal domain of alpha and beta subunits of F1 ATP synthase"/>
    <property type="match status" value="1"/>
</dbReference>
<dbReference type="SUPFAM" id="SSF52540">
    <property type="entry name" value="P-loop containing nucleoside triphosphate hydrolases"/>
    <property type="match status" value="1"/>
</dbReference>
<gene>
    <name evidence="1" type="primary">atpD</name>
    <name type="ordered locus">CA_C2865</name>
</gene>
<name>ATPB_CLOAB</name>